<keyword id="KW-0945">Host-virus interaction</keyword>
<keyword id="KW-1185">Reference proteome</keyword>
<accession>Q9Z0D2</accession>
<gene>
    <name type="primary">DNA-C</name>
    <name type="synonym">C4</name>
</gene>
<comment type="function">
    <text evidence="1">Interacts with and disrupts the function of host retinoblastoma-related proteins RBR, which are key regulators of the cell cycle. Induces transcriptional activation of E2F-regulated S-phase and G2/M-phase-specific genes. Inactivation of the ability of RBR to arrest the cell cycle leads to the stimulation of viral DNA replication (By similarity).</text>
</comment>
<comment type="subunit">
    <text evidence="1">Interacts with host SKP1. Interacts (via LXCXE domain) with host retinoblastoma-related protein 1 (RBR1). Interacts (via LXCXE domain) with retinoblastoma-related proteins (RBR) (By similarity).</text>
</comment>
<comment type="similarity">
    <text evidence="3">Belongs to the nanovirus Clink protein family.</text>
</comment>
<proteinExistence type="inferred from homology"/>
<organismHost>
    <name type="scientific">Astragalus sinicus</name>
    <name type="common">Chinese milk vetch</name>
    <dbReference type="NCBI Taxonomy" id="47065"/>
</organismHost>
<organismHost>
    <name type="scientific">Glycine max</name>
    <name type="common">Soybean</name>
    <name type="synonym">Glycine hispida</name>
    <dbReference type="NCBI Taxonomy" id="3847"/>
</organismHost>
<organismHost>
    <name type="scientific">Phaseolus vulgaris</name>
    <name type="common">Kidney bean</name>
    <name type="synonym">French bean</name>
    <dbReference type="NCBI Taxonomy" id="3885"/>
</organismHost>
<organismHost>
    <name type="scientific">Pisum sativum</name>
    <name type="common">Garden pea</name>
    <name type="synonym">Lathyrus oleraceus</name>
    <dbReference type="NCBI Taxonomy" id="3888"/>
</organismHost>
<organismHost>
    <name type="scientific">Vicia faba</name>
    <name type="common">Broad bean</name>
    <name type="synonym">Faba vulgaris</name>
    <dbReference type="NCBI Taxonomy" id="3906"/>
</organismHost>
<dbReference type="EMBL" id="AB000923">
    <property type="protein sequence ID" value="BAA33983.1"/>
    <property type="molecule type" value="Genomic_DNA"/>
</dbReference>
<dbReference type="RefSeq" id="NP_619762.1">
    <property type="nucleotide sequence ID" value="NC_003641.1"/>
</dbReference>
<dbReference type="SMR" id="Q9Z0D2"/>
<dbReference type="KEGG" id="vg:995281"/>
<dbReference type="Proteomes" id="UP001507899">
    <property type="component" value="Genome"/>
</dbReference>
<organism>
    <name type="scientific">Milk vetch dwarf virus (isolate N)</name>
    <name type="common">MDV</name>
    <dbReference type="NCBI Taxonomy" id="291605"/>
    <lineage>
        <taxon>Viruses</taxon>
        <taxon>Monodnaviria</taxon>
        <taxon>Shotokuvirae</taxon>
        <taxon>Cressdnaviricota</taxon>
        <taxon>Arfiviricetes</taxon>
        <taxon>Mulpavirales</taxon>
        <taxon>Nanoviridae</taxon>
        <taxon>Nanovirus</taxon>
        <taxon>Milk vetch dwarf virus</taxon>
    </lineage>
</organism>
<reference key="1">
    <citation type="journal article" date="1998" name="J. Gen. Virol.">
        <title>Sequences of ten circular ssDNA components associated with the milk vetch dwarf virus genome.</title>
        <authorList>
            <person name="Sano Y."/>
            <person name="Wada M."/>
            <person name="Hashimoto Y."/>
            <person name="Matsumoto T."/>
            <person name="Kojima M."/>
        </authorList>
    </citation>
    <scope>NUCLEOTIDE SEQUENCE [GENOMIC DNA]</scope>
</reference>
<name>CLINK_MDV1</name>
<protein>
    <recommendedName>
        <fullName>Cell cycle link protein</fullName>
        <shortName>Clink</shortName>
    </recommendedName>
</protein>
<sequence length="169" mass="19691">MGLKYFAHLPLELREKIVRDHLQEERKKEFLEKAIEDSCRRHEALLIEDPSPAELNSLSKFLTALSDYVGNQFNTRCLIRWKKDVPSKVKFGFMDEQHHKLYGSMDMDDLSCGELFIPDEEDDLTYEDGVIVRCSQLDQLFKSLGIEIVYIVVSKHCIWAPLSKEIVIK</sequence>
<evidence type="ECO:0000250" key="1"/>
<evidence type="ECO:0000255" key="2"/>
<evidence type="ECO:0000305" key="3"/>
<feature type="chain" id="PRO_0000338626" description="Cell cycle link protein">
    <location>
        <begin position="1"/>
        <end position="169"/>
    </location>
</feature>
<feature type="region of interest" description="Binding to host SKP1 protein" evidence="2">
    <location>
        <begin position="9"/>
        <end position="22"/>
    </location>
</feature>
<feature type="short sequence motif" description="LXCXE motif, interaction with host RBR" evidence="1">
    <location>
        <begin position="110"/>
        <end position="114"/>
    </location>
</feature>